<feature type="chain" id="PRO_1000074201" description="Probable tRNA sulfurtransferase">
    <location>
        <begin position="1"/>
        <end position="392"/>
    </location>
</feature>
<feature type="domain" description="THUMP" evidence="1">
    <location>
        <begin position="59"/>
        <end position="167"/>
    </location>
</feature>
<feature type="binding site" evidence="1">
    <location>
        <begin position="184"/>
        <end position="185"/>
    </location>
    <ligand>
        <name>ATP</name>
        <dbReference type="ChEBI" id="CHEBI:30616"/>
    </ligand>
</feature>
<feature type="binding site" evidence="1">
    <location>
        <begin position="209"/>
        <end position="210"/>
    </location>
    <ligand>
        <name>ATP</name>
        <dbReference type="ChEBI" id="CHEBI:30616"/>
    </ligand>
</feature>
<feature type="binding site" evidence="1">
    <location>
        <position position="266"/>
    </location>
    <ligand>
        <name>ATP</name>
        <dbReference type="ChEBI" id="CHEBI:30616"/>
    </ligand>
</feature>
<feature type="binding site" evidence="1">
    <location>
        <position position="288"/>
    </location>
    <ligand>
        <name>ATP</name>
        <dbReference type="ChEBI" id="CHEBI:30616"/>
    </ligand>
</feature>
<feature type="binding site" evidence="1">
    <location>
        <position position="297"/>
    </location>
    <ligand>
        <name>ATP</name>
        <dbReference type="ChEBI" id="CHEBI:30616"/>
    </ligand>
</feature>
<keyword id="KW-0067">ATP-binding</keyword>
<keyword id="KW-0963">Cytoplasm</keyword>
<keyword id="KW-0547">Nucleotide-binding</keyword>
<keyword id="KW-1185">Reference proteome</keyword>
<keyword id="KW-0694">RNA-binding</keyword>
<keyword id="KW-0784">Thiamine biosynthesis</keyword>
<keyword id="KW-0808">Transferase</keyword>
<keyword id="KW-0820">tRNA-binding</keyword>
<sequence>MENVVIIRYGEIMLKGNNKRFFEDKLVKQIRHALSDLGKLKVYKAHSRIYVDVDAYDVADITDRVKKVFGVVSLSVAKRFEVDMDRIKEVVLEEIKDRMLENPGIKTFKMESKRGDKRFPMQSLEISRELGGHVLENIENISVDVHHPDVSIHVEIRDQAFVFSNKISGFGGLPLGTNGKALLLLSGGIDSPVAGWMVGKRGVDIEAIHFHSYPFTSDRAKEKVMDLAKILSGYCGAFKLYSVNLLPIQKEINEKCPEEEMTILSRRFMMKIAERVALQNDCDALVTGESIGQVASQTVKSLNVTNSAVDLPVFRPLIAMDKVDIIDLSQKIETYETSILPFEDCCTVFLPKHPVTQPKLEKILQSESKLDVEALISAALEALEVEKISIED</sequence>
<reference key="1">
    <citation type="submission" date="2007-10" db="EMBL/GenBank/DDBJ databases">
        <title>Complete genome of Alkaliphilus oremlandii OhILAs.</title>
        <authorList>
            <person name="Copeland A."/>
            <person name="Lucas S."/>
            <person name="Lapidus A."/>
            <person name="Barry K."/>
            <person name="Detter J.C."/>
            <person name="Glavina del Rio T."/>
            <person name="Hammon N."/>
            <person name="Israni S."/>
            <person name="Dalin E."/>
            <person name="Tice H."/>
            <person name="Pitluck S."/>
            <person name="Chain P."/>
            <person name="Malfatti S."/>
            <person name="Shin M."/>
            <person name="Vergez L."/>
            <person name="Schmutz J."/>
            <person name="Larimer F."/>
            <person name="Land M."/>
            <person name="Hauser L."/>
            <person name="Kyrpides N."/>
            <person name="Mikhailova N."/>
            <person name="Stolz J.F."/>
            <person name="Dawson A."/>
            <person name="Fisher E."/>
            <person name="Crable B."/>
            <person name="Perera E."/>
            <person name="Lisak J."/>
            <person name="Ranganathan M."/>
            <person name="Basu P."/>
            <person name="Richardson P."/>
        </authorList>
    </citation>
    <scope>NUCLEOTIDE SEQUENCE [LARGE SCALE GENOMIC DNA]</scope>
    <source>
        <strain>OhILAs</strain>
    </source>
</reference>
<organism>
    <name type="scientific">Alkaliphilus oremlandii (strain OhILAs)</name>
    <name type="common">Clostridium oremlandii (strain OhILAs)</name>
    <dbReference type="NCBI Taxonomy" id="350688"/>
    <lineage>
        <taxon>Bacteria</taxon>
        <taxon>Bacillati</taxon>
        <taxon>Bacillota</taxon>
        <taxon>Clostridia</taxon>
        <taxon>Peptostreptococcales</taxon>
        <taxon>Natronincolaceae</taxon>
        <taxon>Alkaliphilus</taxon>
    </lineage>
</organism>
<comment type="function">
    <text evidence="1">Catalyzes the ATP-dependent transfer of a sulfur to tRNA to produce 4-thiouridine in position 8 of tRNAs, which functions as a near-UV photosensor. Also catalyzes the transfer of sulfur to the sulfur carrier protein ThiS, forming ThiS-thiocarboxylate. This is a step in the synthesis of thiazole, in the thiamine biosynthesis pathway. The sulfur is donated as persulfide by IscS.</text>
</comment>
<comment type="catalytic activity">
    <reaction evidence="1">
        <text>[ThiI sulfur-carrier protein]-S-sulfanyl-L-cysteine + a uridine in tRNA + 2 reduced [2Fe-2S]-[ferredoxin] + ATP + H(+) = [ThiI sulfur-carrier protein]-L-cysteine + a 4-thiouridine in tRNA + 2 oxidized [2Fe-2S]-[ferredoxin] + AMP + diphosphate</text>
        <dbReference type="Rhea" id="RHEA:24176"/>
        <dbReference type="Rhea" id="RHEA-COMP:10000"/>
        <dbReference type="Rhea" id="RHEA-COMP:10001"/>
        <dbReference type="Rhea" id="RHEA-COMP:13337"/>
        <dbReference type="Rhea" id="RHEA-COMP:13338"/>
        <dbReference type="Rhea" id="RHEA-COMP:13339"/>
        <dbReference type="Rhea" id="RHEA-COMP:13340"/>
        <dbReference type="ChEBI" id="CHEBI:15378"/>
        <dbReference type="ChEBI" id="CHEBI:29950"/>
        <dbReference type="ChEBI" id="CHEBI:30616"/>
        <dbReference type="ChEBI" id="CHEBI:33019"/>
        <dbReference type="ChEBI" id="CHEBI:33737"/>
        <dbReference type="ChEBI" id="CHEBI:33738"/>
        <dbReference type="ChEBI" id="CHEBI:61963"/>
        <dbReference type="ChEBI" id="CHEBI:65315"/>
        <dbReference type="ChEBI" id="CHEBI:136798"/>
        <dbReference type="ChEBI" id="CHEBI:456215"/>
        <dbReference type="EC" id="2.8.1.4"/>
    </reaction>
</comment>
<comment type="catalytic activity">
    <reaction evidence="1">
        <text>[ThiS sulfur-carrier protein]-C-terminal Gly-Gly-AMP + S-sulfanyl-L-cysteinyl-[cysteine desulfurase] + AH2 = [ThiS sulfur-carrier protein]-C-terminal-Gly-aminoethanethioate + L-cysteinyl-[cysteine desulfurase] + A + AMP + 2 H(+)</text>
        <dbReference type="Rhea" id="RHEA:43340"/>
        <dbReference type="Rhea" id="RHEA-COMP:12157"/>
        <dbReference type="Rhea" id="RHEA-COMP:12158"/>
        <dbReference type="Rhea" id="RHEA-COMP:12910"/>
        <dbReference type="Rhea" id="RHEA-COMP:19908"/>
        <dbReference type="ChEBI" id="CHEBI:13193"/>
        <dbReference type="ChEBI" id="CHEBI:15378"/>
        <dbReference type="ChEBI" id="CHEBI:17499"/>
        <dbReference type="ChEBI" id="CHEBI:29950"/>
        <dbReference type="ChEBI" id="CHEBI:61963"/>
        <dbReference type="ChEBI" id="CHEBI:90618"/>
        <dbReference type="ChEBI" id="CHEBI:232372"/>
        <dbReference type="ChEBI" id="CHEBI:456215"/>
    </reaction>
</comment>
<comment type="pathway">
    <text evidence="1">Cofactor biosynthesis; thiamine diphosphate biosynthesis.</text>
</comment>
<comment type="subcellular location">
    <subcellularLocation>
        <location evidence="1">Cytoplasm</location>
    </subcellularLocation>
</comment>
<comment type="similarity">
    <text evidence="1">Belongs to the ThiI family.</text>
</comment>
<protein>
    <recommendedName>
        <fullName evidence="1">Probable tRNA sulfurtransferase</fullName>
        <ecNumber evidence="1">2.8.1.4</ecNumber>
    </recommendedName>
    <alternativeName>
        <fullName evidence="1">Sulfur carrier protein ThiS sulfurtransferase</fullName>
    </alternativeName>
    <alternativeName>
        <fullName evidence="1">Thiamine biosynthesis protein ThiI</fullName>
    </alternativeName>
    <alternativeName>
        <fullName evidence="1">tRNA 4-thiouridine synthase</fullName>
    </alternativeName>
</protein>
<evidence type="ECO:0000255" key="1">
    <source>
        <dbReference type="HAMAP-Rule" id="MF_00021"/>
    </source>
</evidence>
<accession>A8MHS1</accession>
<gene>
    <name evidence="1" type="primary">thiI</name>
    <name type="ordered locus">Clos_1813</name>
</gene>
<dbReference type="EC" id="2.8.1.4" evidence="1"/>
<dbReference type="EMBL" id="CP000853">
    <property type="protein sequence ID" value="ABW19353.1"/>
    <property type="molecule type" value="Genomic_DNA"/>
</dbReference>
<dbReference type="RefSeq" id="WP_012159665.1">
    <property type="nucleotide sequence ID" value="NC_009922.1"/>
</dbReference>
<dbReference type="SMR" id="A8MHS1"/>
<dbReference type="STRING" id="350688.Clos_1813"/>
<dbReference type="KEGG" id="aoe:Clos_1813"/>
<dbReference type="eggNOG" id="COG0301">
    <property type="taxonomic scope" value="Bacteria"/>
</dbReference>
<dbReference type="HOGENOM" id="CLU_037952_4_0_9"/>
<dbReference type="OrthoDB" id="9773948at2"/>
<dbReference type="UniPathway" id="UPA00060"/>
<dbReference type="Proteomes" id="UP000000269">
    <property type="component" value="Chromosome"/>
</dbReference>
<dbReference type="GO" id="GO:0005829">
    <property type="term" value="C:cytosol"/>
    <property type="evidence" value="ECO:0007669"/>
    <property type="project" value="TreeGrafter"/>
</dbReference>
<dbReference type="GO" id="GO:0005524">
    <property type="term" value="F:ATP binding"/>
    <property type="evidence" value="ECO:0007669"/>
    <property type="project" value="UniProtKB-UniRule"/>
</dbReference>
<dbReference type="GO" id="GO:0004810">
    <property type="term" value="F:CCA tRNA nucleotidyltransferase activity"/>
    <property type="evidence" value="ECO:0007669"/>
    <property type="project" value="InterPro"/>
</dbReference>
<dbReference type="GO" id="GO:0000049">
    <property type="term" value="F:tRNA binding"/>
    <property type="evidence" value="ECO:0007669"/>
    <property type="project" value="UniProtKB-UniRule"/>
</dbReference>
<dbReference type="GO" id="GO:0140741">
    <property type="term" value="F:tRNA-uracil-4 sulfurtransferase activity"/>
    <property type="evidence" value="ECO:0007669"/>
    <property type="project" value="UniProtKB-EC"/>
</dbReference>
<dbReference type="GO" id="GO:0009228">
    <property type="term" value="P:thiamine biosynthetic process"/>
    <property type="evidence" value="ECO:0007669"/>
    <property type="project" value="UniProtKB-KW"/>
</dbReference>
<dbReference type="GO" id="GO:0009229">
    <property type="term" value="P:thiamine diphosphate biosynthetic process"/>
    <property type="evidence" value="ECO:0007669"/>
    <property type="project" value="UniProtKB-UniRule"/>
</dbReference>
<dbReference type="GO" id="GO:0052837">
    <property type="term" value="P:thiazole biosynthetic process"/>
    <property type="evidence" value="ECO:0007669"/>
    <property type="project" value="TreeGrafter"/>
</dbReference>
<dbReference type="GO" id="GO:0002937">
    <property type="term" value="P:tRNA 4-thiouridine biosynthesis"/>
    <property type="evidence" value="ECO:0007669"/>
    <property type="project" value="TreeGrafter"/>
</dbReference>
<dbReference type="CDD" id="cd01712">
    <property type="entry name" value="PPase_ThiI"/>
    <property type="match status" value="1"/>
</dbReference>
<dbReference type="CDD" id="cd11716">
    <property type="entry name" value="THUMP_ThiI"/>
    <property type="match status" value="1"/>
</dbReference>
<dbReference type="FunFam" id="3.40.50.620:FF:000053">
    <property type="entry name" value="Probable tRNA sulfurtransferase"/>
    <property type="match status" value="1"/>
</dbReference>
<dbReference type="Gene3D" id="3.30.2130.30">
    <property type="match status" value="1"/>
</dbReference>
<dbReference type="Gene3D" id="3.40.50.620">
    <property type="entry name" value="HUPs"/>
    <property type="match status" value="1"/>
</dbReference>
<dbReference type="HAMAP" id="MF_00021">
    <property type="entry name" value="ThiI"/>
    <property type="match status" value="1"/>
</dbReference>
<dbReference type="InterPro" id="IPR014729">
    <property type="entry name" value="Rossmann-like_a/b/a_fold"/>
</dbReference>
<dbReference type="InterPro" id="IPR020536">
    <property type="entry name" value="ThiI_AANH"/>
</dbReference>
<dbReference type="InterPro" id="IPR054173">
    <property type="entry name" value="ThiI_fer"/>
</dbReference>
<dbReference type="InterPro" id="IPR049961">
    <property type="entry name" value="ThiI_N"/>
</dbReference>
<dbReference type="InterPro" id="IPR004114">
    <property type="entry name" value="THUMP_dom"/>
</dbReference>
<dbReference type="InterPro" id="IPR049962">
    <property type="entry name" value="THUMP_ThiI"/>
</dbReference>
<dbReference type="InterPro" id="IPR003720">
    <property type="entry name" value="tRNA_STrfase"/>
</dbReference>
<dbReference type="InterPro" id="IPR050102">
    <property type="entry name" value="tRNA_sulfurtransferase_ThiI"/>
</dbReference>
<dbReference type="NCBIfam" id="TIGR00342">
    <property type="entry name" value="tRNA uracil 4-sulfurtransferase ThiI"/>
    <property type="match status" value="1"/>
</dbReference>
<dbReference type="PANTHER" id="PTHR43209">
    <property type="entry name" value="TRNA SULFURTRANSFERASE"/>
    <property type="match status" value="1"/>
</dbReference>
<dbReference type="PANTHER" id="PTHR43209:SF1">
    <property type="entry name" value="TRNA SULFURTRANSFERASE"/>
    <property type="match status" value="1"/>
</dbReference>
<dbReference type="Pfam" id="PF02568">
    <property type="entry name" value="ThiI"/>
    <property type="match status" value="1"/>
</dbReference>
<dbReference type="Pfam" id="PF22025">
    <property type="entry name" value="ThiI_fer"/>
    <property type="match status" value="1"/>
</dbReference>
<dbReference type="Pfam" id="PF02926">
    <property type="entry name" value="THUMP"/>
    <property type="match status" value="1"/>
</dbReference>
<dbReference type="SMART" id="SM00981">
    <property type="entry name" value="THUMP"/>
    <property type="match status" value="1"/>
</dbReference>
<dbReference type="SUPFAM" id="SSF52402">
    <property type="entry name" value="Adenine nucleotide alpha hydrolases-like"/>
    <property type="match status" value="1"/>
</dbReference>
<dbReference type="SUPFAM" id="SSF143437">
    <property type="entry name" value="THUMP domain-like"/>
    <property type="match status" value="1"/>
</dbReference>
<dbReference type="PROSITE" id="PS51165">
    <property type="entry name" value="THUMP"/>
    <property type="match status" value="1"/>
</dbReference>
<name>THII_ALKOO</name>
<proteinExistence type="inferred from homology"/>